<reference evidence="8" key="1">
    <citation type="journal article" date="2002" name="Nature">
        <title>The genome sequence of Schizosaccharomyces pombe.</title>
        <authorList>
            <person name="Wood V."/>
            <person name="Gwilliam R."/>
            <person name="Rajandream M.A."/>
            <person name="Lyne M.H."/>
            <person name="Lyne R."/>
            <person name="Stewart A."/>
            <person name="Sgouros J.G."/>
            <person name="Peat N."/>
            <person name="Hayles J."/>
            <person name="Baker S.G."/>
            <person name="Basham D."/>
            <person name="Bowman S."/>
            <person name="Brooks K."/>
            <person name="Brown D."/>
            <person name="Brown S."/>
            <person name="Chillingworth T."/>
            <person name="Churcher C.M."/>
            <person name="Collins M."/>
            <person name="Connor R."/>
            <person name="Cronin A."/>
            <person name="Davis P."/>
            <person name="Feltwell T."/>
            <person name="Fraser A."/>
            <person name="Gentles S."/>
            <person name="Goble A."/>
            <person name="Hamlin N."/>
            <person name="Harris D.E."/>
            <person name="Hidalgo J."/>
            <person name="Hodgson G."/>
            <person name="Holroyd S."/>
            <person name="Hornsby T."/>
            <person name="Howarth S."/>
            <person name="Huckle E.J."/>
            <person name="Hunt S."/>
            <person name="Jagels K."/>
            <person name="James K.D."/>
            <person name="Jones L."/>
            <person name="Jones M."/>
            <person name="Leather S."/>
            <person name="McDonald S."/>
            <person name="McLean J."/>
            <person name="Mooney P."/>
            <person name="Moule S."/>
            <person name="Mungall K.L."/>
            <person name="Murphy L.D."/>
            <person name="Niblett D."/>
            <person name="Odell C."/>
            <person name="Oliver K."/>
            <person name="O'Neil S."/>
            <person name="Pearson D."/>
            <person name="Quail M.A."/>
            <person name="Rabbinowitsch E."/>
            <person name="Rutherford K.M."/>
            <person name="Rutter S."/>
            <person name="Saunders D."/>
            <person name="Seeger K."/>
            <person name="Sharp S."/>
            <person name="Skelton J."/>
            <person name="Simmonds M.N."/>
            <person name="Squares R."/>
            <person name="Squares S."/>
            <person name="Stevens K."/>
            <person name="Taylor K."/>
            <person name="Taylor R.G."/>
            <person name="Tivey A."/>
            <person name="Walsh S.V."/>
            <person name="Warren T."/>
            <person name="Whitehead S."/>
            <person name="Woodward J.R."/>
            <person name="Volckaert G."/>
            <person name="Aert R."/>
            <person name="Robben J."/>
            <person name="Grymonprez B."/>
            <person name="Weltjens I."/>
            <person name="Vanstreels E."/>
            <person name="Rieger M."/>
            <person name="Schaefer M."/>
            <person name="Mueller-Auer S."/>
            <person name="Gabel C."/>
            <person name="Fuchs M."/>
            <person name="Duesterhoeft A."/>
            <person name="Fritzc C."/>
            <person name="Holzer E."/>
            <person name="Moestl D."/>
            <person name="Hilbert H."/>
            <person name="Borzym K."/>
            <person name="Langer I."/>
            <person name="Beck A."/>
            <person name="Lehrach H."/>
            <person name="Reinhardt R."/>
            <person name="Pohl T.M."/>
            <person name="Eger P."/>
            <person name="Zimmermann W."/>
            <person name="Wedler H."/>
            <person name="Wambutt R."/>
            <person name="Purnelle B."/>
            <person name="Goffeau A."/>
            <person name="Cadieu E."/>
            <person name="Dreano S."/>
            <person name="Gloux S."/>
            <person name="Lelaure V."/>
            <person name="Mottier S."/>
            <person name="Galibert F."/>
            <person name="Aves S.J."/>
            <person name="Xiang Z."/>
            <person name="Hunt C."/>
            <person name="Moore K."/>
            <person name="Hurst S.M."/>
            <person name="Lucas M."/>
            <person name="Rochet M."/>
            <person name="Gaillardin C."/>
            <person name="Tallada V.A."/>
            <person name="Garzon A."/>
            <person name="Thode G."/>
            <person name="Daga R.R."/>
            <person name="Cruzado L."/>
            <person name="Jimenez J."/>
            <person name="Sanchez M."/>
            <person name="del Rey F."/>
            <person name="Benito J."/>
            <person name="Dominguez A."/>
            <person name="Revuelta J.L."/>
            <person name="Moreno S."/>
            <person name="Armstrong J."/>
            <person name="Forsburg S.L."/>
            <person name="Cerutti L."/>
            <person name="Lowe T."/>
            <person name="McCombie W.R."/>
            <person name="Paulsen I."/>
            <person name="Potashkin J."/>
            <person name="Shpakovski G.V."/>
            <person name="Ussery D."/>
            <person name="Barrell B.G."/>
            <person name="Nurse P."/>
        </authorList>
    </citation>
    <scope>NUCLEOTIDE SEQUENCE [LARGE SCALE GENOMIC DNA]</scope>
    <source>
        <strain>972 / ATCC 24843</strain>
    </source>
</reference>
<reference evidence="7" key="2">
    <citation type="journal article" date="2003" name="J. Cell Biol.">
        <title>The PCH family protein, Cdc15p, recruits two F-actin nucleation pathways to coordinate cytokinetic actin ring formation in Schizosaccharomyces pombe.</title>
        <authorList>
            <person name="Carnahan R.H."/>
            <person name="Gould K.L."/>
        </authorList>
    </citation>
    <scope>SUBCELLULAR LOCATION</scope>
    <scope>INTERACTION WITH WSP1</scope>
    <scope>DISRUPTION PHENOTYPE</scope>
</reference>
<reference evidence="7" key="3">
    <citation type="journal article" date="2005" name="J. Cell Biol.">
        <title>Interactions of WASp, myosin-I, and verprolin with Arp2/3 complex during actin patch assembly in fission yeast.</title>
        <authorList>
            <person name="Sirotkin V."/>
            <person name="Beltzner C.C."/>
            <person name="Marchand J.-B."/>
            <person name="Pollard T.D."/>
        </authorList>
    </citation>
    <scope>FUNCTION</scope>
    <scope>INTERACTION WITH MYO1 AND ACTIN MONOMERS</scope>
    <scope>SUBCELLULAR LOCATION</scope>
    <scope>DISRUPTION PHENOTYPE</scope>
</reference>
<reference evidence="7" key="4">
    <citation type="journal article" date="2006" name="Nat. Biotechnol.">
        <title>ORFeome cloning and global analysis of protein localization in the fission yeast Schizosaccharomyces pombe.</title>
        <authorList>
            <person name="Matsuyama A."/>
            <person name="Arai R."/>
            <person name="Yashiroda Y."/>
            <person name="Shirai A."/>
            <person name="Kamata A."/>
            <person name="Sekido S."/>
            <person name="Kobayashi Y."/>
            <person name="Hashimoto A."/>
            <person name="Hamamoto M."/>
            <person name="Hiraoka Y."/>
            <person name="Horinouchi S."/>
            <person name="Yoshida M."/>
        </authorList>
    </citation>
    <scope>SUBCELLULAR LOCATION [LARGE SCALE ANALYSIS]</scope>
</reference>
<comment type="function">
    <text evidence="5">Involved in cytoskeletal organization and cellular growth. May exert its effects on the cytoskeleton directly, or indirectly via proline-binding proteins such as profilin or proteins possessing SH3 domains. Plays a role in actin patch assembly by enhancing the ability of myo1 to stimulate actin polymerization by the Arp2/3 complex.</text>
</comment>
<comment type="subunit">
    <text evidence="4 5">Interacts with wsp1. Interacts with myo1 (via SH3 domain). Interacts with actin monomers.</text>
</comment>
<comment type="interaction">
    <interactant intactId="EBI-1148131">
        <id>Q9P6R1</id>
    </interactant>
    <interactant intactId="EBI-1148109">
        <id>O36027</id>
        <label>wsp1</label>
    </interactant>
    <organismsDiffer>false</organismsDiffer>
    <experiments>3</experiments>
</comment>
<comment type="subcellular location">
    <subcellularLocation>
        <location evidence="4 5 6">Cytoplasm</location>
        <location evidence="4 5 6">Cytoskeleton</location>
    </subcellularLocation>
    <text>Localized to patches at the tips of growing interphase cells. These patches form prior to patches of myo1, but in cells lacking myo1, they are less intense and may be short lived. Detected in the medial region of mitotic cells, and this requires cdc15.</text>
</comment>
<comment type="disruption phenotype">
    <text evidence="4 5">Grows normally at 25 degrees Celsius. Displays morphological defects at high temperatures and is cold sensitive. At 18 degrees Celsius, becomes rounded, characteristic of a polarity defect. Synthetically lethal with deletion of myo1.</text>
</comment>
<comment type="similarity">
    <text evidence="1">Belongs to the verprolin family.</text>
</comment>
<dbReference type="EMBL" id="CU329671">
    <property type="protein sequence ID" value="CAB89884.1"/>
    <property type="molecule type" value="Genomic_DNA"/>
</dbReference>
<dbReference type="RefSeq" id="NP_596264.1">
    <property type="nucleotide sequence ID" value="NM_001022184.2"/>
</dbReference>
<dbReference type="SMR" id="Q9P6R1"/>
<dbReference type="BioGRID" id="276638">
    <property type="interactions" value="82"/>
</dbReference>
<dbReference type="FunCoup" id="Q9P6R1">
    <property type="interactions" value="1"/>
</dbReference>
<dbReference type="IntAct" id="Q9P6R1">
    <property type="interactions" value="3"/>
</dbReference>
<dbReference type="STRING" id="284812.Q9P6R1"/>
<dbReference type="iPTMnet" id="Q9P6R1"/>
<dbReference type="PaxDb" id="4896-SPBC13E7.09.1"/>
<dbReference type="EnsemblFungi" id="SPBC13E7.09.1">
    <property type="protein sequence ID" value="SPBC13E7.09.1:pep"/>
    <property type="gene ID" value="SPBC13E7.09"/>
</dbReference>
<dbReference type="PomBase" id="SPBC13E7.09">
    <property type="gene designation" value="vrp1"/>
</dbReference>
<dbReference type="VEuPathDB" id="FungiDB:SPBC13E7.09"/>
<dbReference type="eggNOG" id="KOG4462">
    <property type="taxonomic scope" value="Eukaryota"/>
</dbReference>
<dbReference type="HOGENOM" id="CLU_049614_0_0_1"/>
<dbReference type="InParanoid" id="Q9P6R1"/>
<dbReference type="OMA" id="QWQHNAT"/>
<dbReference type="PRO" id="PR:Q9P6R1"/>
<dbReference type="Proteomes" id="UP000002485">
    <property type="component" value="Chromosome II"/>
</dbReference>
<dbReference type="GO" id="GO:0030479">
    <property type="term" value="C:actin cortical patch"/>
    <property type="evidence" value="ECO:0000314"/>
    <property type="project" value="PomBase"/>
</dbReference>
<dbReference type="GO" id="GO:0005829">
    <property type="term" value="C:cytosol"/>
    <property type="evidence" value="ECO:0007005"/>
    <property type="project" value="PomBase"/>
</dbReference>
<dbReference type="GO" id="GO:0031097">
    <property type="term" value="C:medial cortex"/>
    <property type="evidence" value="ECO:0000314"/>
    <property type="project" value="PomBase"/>
</dbReference>
<dbReference type="GO" id="GO:0005634">
    <property type="term" value="C:nucleus"/>
    <property type="evidence" value="ECO:0007005"/>
    <property type="project" value="PomBase"/>
</dbReference>
<dbReference type="GO" id="GO:0035840">
    <property type="term" value="C:old growing cell tip"/>
    <property type="evidence" value="ECO:0000314"/>
    <property type="project" value="PomBase"/>
</dbReference>
<dbReference type="GO" id="GO:0003785">
    <property type="term" value="F:actin monomer binding"/>
    <property type="evidence" value="ECO:0000314"/>
    <property type="project" value="PomBase"/>
</dbReference>
<dbReference type="GO" id="GO:0000147">
    <property type="term" value="P:actin cortical patch assembly"/>
    <property type="evidence" value="ECO:0000316"/>
    <property type="project" value="PomBase"/>
</dbReference>
<dbReference type="GO" id="GO:0006897">
    <property type="term" value="P:endocytosis"/>
    <property type="evidence" value="ECO:0000266"/>
    <property type="project" value="PomBase"/>
</dbReference>
<dbReference type="InterPro" id="IPR003124">
    <property type="entry name" value="WH2_dom"/>
</dbReference>
<dbReference type="Pfam" id="PF02205">
    <property type="entry name" value="WH2"/>
    <property type="match status" value="1"/>
</dbReference>
<dbReference type="SMART" id="SM00246">
    <property type="entry name" value="WH2"/>
    <property type="match status" value="1"/>
</dbReference>
<dbReference type="PROSITE" id="PS51082">
    <property type="entry name" value="WH2"/>
    <property type="match status" value="1"/>
</dbReference>
<feature type="chain" id="PRO_0000364026" description="Verprolin">
    <location>
        <begin position="1"/>
        <end position="309"/>
    </location>
</feature>
<feature type="domain" description="WH2" evidence="2">
    <location>
        <begin position="27"/>
        <end position="44"/>
    </location>
</feature>
<feature type="region of interest" description="Disordered" evidence="3">
    <location>
        <begin position="1"/>
        <end position="273"/>
    </location>
</feature>
<feature type="compositionally biased region" description="Pro residues" evidence="3">
    <location>
        <begin position="1"/>
        <end position="13"/>
    </location>
</feature>
<feature type="compositionally biased region" description="Polar residues" evidence="3">
    <location>
        <begin position="82"/>
        <end position="91"/>
    </location>
</feature>
<feature type="compositionally biased region" description="Pro residues" evidence="3">
    <location>
        <begin position="141"/>
        <end position="207"/>
    </location>
</feature>
<name>VRP1_SCHPO</name>
<evidence type="ECO:0000255" key="1"/>
<evidence type="ECO:0000255" key="2">
    <source>
        <dbReference type="PROSITE-ProRule" id="PRU00406"/>
    </source>
</evidence>
<evidence type="ECO:0000256" key="3">
    <source>
        <dbReference type="SAM" id="MobiDB-lite"/>
    </source>
</evidence>
<evidence type="ECO:0000269" key="4">
    <source>
    </source>
</evidence>
<evidence type="ECO:0000269" key="5">
    <source>
    </source>
</evidence>
<evidence type="ECO:0000269" key="6">
    <source>
    </source>
</evidence>
<evidence type="ECO:0000305" key="7"/>
<evidence type="ECO:0000312" key="8">
    <source>
        <dbReference type="EMBL" id="CAB89884.1"/>
    </source>
</evidence>
<organism>
    <name type="scientific">Schizosaccharomyces pombe (strain 972 / ATCC 24843)</name>
    <name type="common">Fission yeast</name>
    <dbReference type="NCBI Taxonomy" id="284812"/>
    <lineage>
        <taxon>Eukaryota</taxon>
        <taxon>Fungi</taxon>
        <taxon>Dikarya</taxon>
        <taxon>Ascomycota</taxon>
        <taxon>Taphrinomycotina</taxon>
        <taxon>Schizosaccharomycetes</taxon>
        <taxon>Schizosaccharomycetales</taxon>
        <taxon>Schizosaccharomycetaceae</taxon>
        <taxon>Schizosaccharomyces</taxon>
    </lineage>
</organism>
<keyword id="KW-0009">Actin-binding</keyword>
<keyword id="KW-0963">Cytoplasm</keyword>
<keyword id="KW-0206">Cytoskeleton</keyword>
<keyword id="KW-1185">Reference proteome</keyword>
<protein>
    <recommendedName>
        <fullName evidence="8">Verprolin</fullName>
    </recommendedName>
</protein>
<gene>
    <name evidence="8" type="primary">vrp1</name>
    <name type="ORF">SPBC13E7.09</name>
</gene>
<sequence>MAPAPPPPPPAPAPAAAAPAPPLMTGDRSALLNSIQKGKKLKKATTNDRSAPVVGGGVVGERKSNTPKSFAAPPVPTGAPSLPTSSNNTQQAEERPSMPALGGLFAGGMPKLRHIGKSSASAAPPSAPAPPTPQSELRPPTSAPPRPSIPPPSPASAPPIPSKAPPIPSSLPPPAQPAAPVKSPPSAPSLPSAVPPMPPKVPPPPLSQAPVANTSSRPSSFAPPAGHAPNVTSESPKFPNRGPSIPSASVPPVPPSSYVLQQRPNRVDDHGRFHFKDDSYLPIPHPFLGVPKVYRGGSGTTVPLNLSSF</sequence>
<proteinExistence type="evidence at protein level"/>
<accession>Q9P6R1</accession>